<sequence length="61" mass="6530">MGLSGISPLSLLLILAIIVALFGTSKLKTIGSDLGEAIKNFRKAMNSEETNDTQKDDHKPS</sequence>
<feature type="chain" id="PRO_0000336630" description="Sec-independent protein translocase protein TatA">
    <location>
        <begin position="1"/>
        <end position="61"/>
    </location>
</feature>
<feature type="transmembrane region" description="Helical" evidence="1">
    <location>
        <begin position="2"/>
        <end position="22"/>
    </location>
</feature>
<reference key="1">
    <citation type="journal article" date="2004" name="Nat. Genet.">
        <title>Evidence in the Legionella pneumophila genome for exploitation of host cell functions and high genome plasticity.</title>
        <authorList>
            <person name="Cazalet C."/>
            <person name="Rusniok C."/>
            <person name="Brueggemann H."/>
            <person name="Zidane N."/>
            <person name="Magnier A."/>
            <person name="Ma L."/>
            <person name="Tichit M."/>
            <person name="Jarraud S."/>
            <person name="Bouchier C."/>
            <person name="Vandenesch F."/>
            <person name="Kunst F."/>
            <person name="Etienne J."/>
            <person name="Glaser P."/>
            <person name="Buchrieser C."/>
        </authorList>
    </citation>
    <scope>NUCLEOTIDE SEQUENCE [LARGE SCALE GENOMIC DNA]</scope>
    <source>
        <strain>Lens</strain>
    </source>
</reference>
<dbReference type="EMBL" id="CR628337">
    <property type="protein sequence ID" value="CAH17064.1"/>
    <property type="molecule type" value="Genomic_DNA"/>
</dbReference>
<dbReference type="RefSeq" id="WP_011216738.1">
    <property type="nucleotide sequence ID" value="NC_006369.1"/>
</dbReference>
<dbReference type="SMR" id="Q5WSQ5"/>
<dbReference type="KEGG" id="lpf:lpl2821"/>
<dbReference type="LegioList" id="lpl2821"/>
<dbReference type="HOGENOM" id="CLU_086034_6_1_6"/>
<dbReference type="Proteomes" id="UP000002517">
    <property type="component" value="Chromosome"/>
</dbReference>
<dbReference type="GO" id="GO:0033281">
    <property type="term" value="C:TAT protein transport complex"/>
    <property type="evidence" value="ECO:0007669"/>
    <property type="project" value="UniProtKB-UniRule"/>
</dbReference>
<dbReference type="GO" id="GO:0008320">
    <property type="term" value="F:protein transmembrane transporter activity"/>
    <property type="evidence" value="ECO:0007669"/>
    <property type="project" value="UniProtKB-UniRule"/>
</dbReference>
<dbReference type="GO" id="GO:0043953">
    <property type="term" value="P:protein transport by the Tat complex"/>
    <property type="evidence" value="ECO:0007669"/>
    <property type="project" value="UniProtKB-UniRule"/>
</dbReference>
<dbReference type="Gene3D" id="1.20.5.3310">
    <property type="match status" value="1"/>
</dbReference>
<dbReference type="HAMAP" id="MF_00236">
    <property type="entry name" value="TatA_E"/>
    <property type="match status" value="1"/>
</dbReference>
<dbReference type="InterPro" id="IPR003369">
    <property type="entry name" value="TatA/B/E"/>
</dbReference>
<dbReference type="InterPro" id="IPR006312">
    <property type="entry name" value="TatA/E"/>
</dbReference>
<dbReference type="NCBIfam" id="TIGR01411">
    <property type="entry name" value="tatAE"/>
    <property type="match status" value="1"/>
</dbReference>
<dbReference type="PANTHER" id="PTHR42982">
    <property type="entry name" value="SEC-INDEPENDENT PROTEIN TRANSLOCASE PROTEIN TATA"/>
    <property type="match status" value="1"/>
</dbReference>
<dbReference type="PANTHER" id="PTHR42982:SF1">
    <property type="entry name" value="SEC-INDEPENDENT PROTEIN TRANSLOCASE PROTEIN TATA"/>
    <property type="match status" value="1"/>
</dbReference>
<dbReference type="Pfam" id="PF02416">
    <property type="entry name" value="TatA_B_E"/>
    <property type="match status" value="1"/>
</dbReference>
<keyword id="KW-0997">Cell inner membrane</keyword>
<keyword id="KW-1003">Cell membrane</keyword>
<keyword id="KW-0472">Membrane</keyword>
<keyword id="KW-0653">Protein transport</keyword>
<keyword id="KW-0811">Translocation</keyword>
<keyword id="KW-0812">Transmembrane</keyword>
<keyword id="KW-1133">Transmembrane helix</keyword>
<keyword id="KW-0813">Transport</keyword>
<protein>
    <recommendedName>
        <fullName evidence="1">Sec-independent protein translocase protein TatA</fullName>
    </recommendedName>
</protein>
<organism>
    <name type="scientific">Legionella pneumophila (strain Lens)</name>
    <dbReference type="NCBI Taxonomy" id="297245"/>
    <lineage>
        <taxon>Bacteria</taxon>
        <taxon>Pseudomonadati</taxon>
        <taxon>Pseudomonadota</taxon>
        <taxon>Gammaproteobacteria</taxon>
        <taxon>Legionellales</taxon>
        <taxon>Legionellaceae</taxon>
        <taxon>Legionella</taxon>
    </lineage>
</organism>
<evidence type="ECO:0000255" key="1">
    <source>
        <dbReference type="HAMAP-Rule" id="MF_00236"/>
    </source>
</evidence>
<gene>
    <name evidence="1" type="primary">tatA</name>
    <name type="ordered locus">lpl2821</name>
</gene>
<proteinExistence type="inferred from homology"/>
<accession>Q5WSQ5</accession>
<comment type="function">
    <text evidence="1">Part of the twin-arginine translocation (Tat) system that transports large folded proteins containing a characteristic twin-arginine motif in their signal peptide across membranes. TatA could form the protein-conducting channel of the Tat system.</text>
</comment>
<comment type="subunit">
    <text evidence="1">The Tat system comprises two distinct complexes: a TatABC complex, containing multiple copies of TatA, TatB and TatC subunits, and a separate TatA complex, containing only TatA subunits. Substrates initially bind to the TatABC complex, which probably triggers association of the separate TatA complex to form the active translocon.</text>
</comment>
<comment type="subcellular location">
    <subcellularLocation>
        <location evidence="1">Cell inner membrane</location>
        <topology evidence="1">Single-pass membrane protein</topology>
    </subcellularLocation>
</comment>
<comment type="similarity">
    <text evidence="1">Belongs to the TatA/E family.</text>
</comment>
<name>TATA_LEGPL</name>